<organism>
    <name type="scientific">Caenorhabditis elegans</name>
    <dbReference type="NCBI Taxonomy" id="6239"/>
    <lineage>
        <taxon>Eukaryota</taxon>
        <taxon>Metazoa</taxon>
        <taxon>Ecdysozoa</taxon>
        <taxon>Nematoda</taxon>
        <taxon>Chromadorea</taxon>
        <taxon>Rhabditida</taxon>
        <taxon>Rhabditina</taxon>
        <taxon>Rhabditomorpha</taxon>
        <taxon>Rhabditoidea</taxon>
        <taxon>Rhabditidae</taxon>
        <taxon>Peloderinae</taxon>
        <taxon>Caenorhabditis</taxon>
    </lineage>
</organism>
<evidence type="ECO:0000250" key="1"/>
<evidence type="ECO:0000250" key="2">
    <source>
        <dbReference type="UniProtKB" id="P42412"/>
    </source>
</evidence>
<evidence type="ECO:0000250" key="3">
    <source>
        <dbReference type="UniProtKB" id="Q02253"/>
    </source>
</evidence>
<evidence type="ECO:0000255" key="4">
    <source>
        <dbReference type="PROSITE-ProRule" id="PRU10008"/>
    </source>
</evidence>
<evidence type="ECO:0000305" key="5"/>
<feature type="transit peptide" description="Mitochondrion" evidence="1">
    <location>
        <begin position="1"/>
        <end position="22"/>
    </location>
</feature>
<feature type="chain" id="PRO_0000007191" description="Probable methylmalonate-semialdehyde/malonate-semialdehyde dehydrogenase [acylating], mitochondrial">
    <location>
        <begin position="23"/>
        <end position="523"/>
    </location>
</feature>
<feature type="active site" description="Nucleophile" evidence="4">
    <location>
        <position position="307"/>
    </location>
</feature>
<feature type="binding site" evidence="2">
    <location>
        <position position="175"/>
    </location>
    <ligand>
        <name>NAD(+)</name>
        <dbReference type="ChEBI" id="CHEBI:57540"/>
    </ligand>
</feature>
<feature type="binding site" evidence="2">
    <location>
        <position position="199"/>
    </location>
    <ligand>
        <name>NAD(+)</name>
        <dbReference type="ChEBI" id="CHEBI:57540"/>
    </ligand>
</feature>
<feature type="binding site" evidence="2">
    <location>
        <position position="202"/>
    </location>
    <ligand>
        <name>NAD(+)</name>
        <dbReference type="ChEBI" id="CHEBI:57540"/>
    </ligand>
</feature>
<feature type="binding site" evidence="2">
    <location>
        <position position="407"/>
    </location>
    <ligand>
        <name>NAD(+)</name>
        <dbReference type="ChEBI" id="CHEBI:57540"/>
    </ligand>
</feature>
<keyword id="KW-0496">Mitochondrion</keyword>
<keyword id="KW-0520">NAD</keyword>
<keyword id="KW-0560">Oxidoreductase</keyword>
<keyword id="KW-1185">Reference proteome</keyword>
<keyword id="KW-0809">Transit peptide</keyword>
<gene>
    <name type="primary">alh-8</name>
    <name type="ORF">F13D12.4</name>
</gene>
<protein>
    <recommendedName>
        <fullName evidence="3">Probable methylmalonate-semialdehyde/malonate-semialdehyde dehydrogenase [acylating], mitochondrial</fullName>
        <shortName evidence="3">MMSDH</shortName>
        <ecNumber evidence="3">1.2.1.27</ecNumber>
    </recommendedName>
    <alternativeName>
        <fullName evidence="3">Malonate-semialdehyde dehydrogenase [acylating]</fullName>
    </alternativeName>
</protein>
<proteinExistence type="inferred from homology"/>
<accession>P52713</accession>
<sequence length="523" mass="56462">MLSRLARVQPKCQQLAHFSTSKSAAAAPTVKLWIDGQAVESKTTDFVELTNPATNEVIAMVPNATQAEMQAAVDSAKNAFNTWKNTSPLTRQQCMFKLQALIKRDMKKLAESITIEQGKTLPDAEGDVSRGLQVVEHACSVPSLMMGETLPNVSRDMDTHSYRIPLGVTAGICPFNFPAMIPLWMFPVALATGNTMVIKPSEQDPGAAQLLVELAKEAGVPDGCVNIIHGQHSAVNFICDNPDIKAISFVGGDAAGKHIYERGAKNGKRVQSNMGAKNHGVIMADANKEQTLNQLTAAAFGAAGQRCMALTTAVLVGEARAWLPELVEKAKNLKVNAGWKPDTDIGPLISKQSKARVLRLIESAKKEGAQVPLDGSNITVPGFENGNFVGPTILAGVKPNMTCYREEIFGPVLVVMEAENLNEAIEIINNNPYGNGTAIFTSNGATARKFTNEVDVGQIGINVPIPVPLPMFSFTGSRGSFLGDLNFYGKAGIQFYTQWKTVTQYWNESLTELKPQMSFPQLK</sequence>
<comment type="function">
    <text evidence="3">Probable malonate and methylmalonate semialdehyde dehydrogenase involved in the catabolism of valine, thymine, and compounds catabolized by way of beta-alanine, including uracil and cytidine.</text>
</comment>
<comment type="catalytic activity">
    <reaction evidence="3">
        <text>2-methyl-3-oxopropanoate + NAD(+) + CoA + H2O = propanoyl-CoA + hydrogencarbonate + NADH + H(+)</text>
        <dbReference type="Rhea" id="RHEA:20804"/>
        <dbReference type="ChEBI" id="CHEBI:15377"/>
        <dbReference type="ChEBI" id="CHEBI:15378"/>
        <dbReference type="ChEBI" id="CHEBI:17544"/>
        <dbReference type="ChEBI" id="CHEBI:57287"/>
        <dbReference type="ChEBI" id="CHEBI:57392"/>
        <dbReference type="ChEBI" id="CHEBI:57540"/>
        <dbReference type="ChEBI" id="CHEBI:57700"/>
        <dbReference type="ChEBI" id="CHEBI:57945"/>
        <dbReference type="EC" id="1.2.1.27"/>
    </reaction>
    <physiologicalReaction direction="left-to-right" evidence="3">
        <dbReference type="Rhea" id="RHEA:20805"/>
    </physiologicalReaction>
</comment>
<comment type="catalytic activity">
    <reaction evidence="3">
        <text>3-oxopropanoate + NAD(+) + CoA + H2O = hydrogencarbonate + acetyl-CoA + NADH + H(+)</text>
        <dbReference type="Rhea" id="RHEA:76615"/>
        <dbReference type="ChEBI" id="CHEBI:15377"/>
        <dbReference type="ChEBI" id="CHEBI:15378"/>
        <dbReference type="ChEBI" id="CHEBI:17544"/>
        <dbReference type="ChEBI" id="CHEBI:33190"/>
        <dbReference type="ChEBI" id="CHEBI:57287"/>
        <dbReference type="ChEBI" id="CHEBI:57288"/>
        <dbReference type="ChEBI" id="CHEBI:57540"/>
        <dbReference type="ChEBI" id="CHEBI:57945"/>
        <dbReference type="EC" id="1.2.1.27"/>
    </reaction>
    <physiologicalReaction direction="left-to-right" evidence="3">
        <dbReference type="Rhea" id="RHEA:76616"/>
    </physiologicalReaction>
</comment>
<comment type="subunit">
    <text evidence="3">Homodimer.</text>
</comment>
<comment type="subcellular location">
    <subcellularLocation>
        <location evidence="3">Mitochondrion</location>
    </subcellularLocation>
</comment>
<comment type="similarity">
    <text evidence="5">Belongs to the aldehyde dehydrogenase family.</text>
</comment>
<reference key="1">
    <citation type="journal article" date="1998" name="Science">
        <title>Genome sequence of the nematode C. elegans: a platform for investigating biology.</title>
        <authorList>
            <consortium name="The C. elegans sequencing consortium"/>
        </authorList>
    </citation>
    <scope>NUCLEOTIDE SEQUENCE [LARGE SCALE GENOMIC DNA]</scope>
    <source>
        <strain>Bristol N2</strain>
    </source>
</reference>
<dbReference type="EC" id="1.2.1.27" evidence="3"/>
<dbReference type="EMBL" id="Z49127">
    <property type="protein sequence ID" value="CAA88946.1"/>
    <property type="molecule type" value="Genomic_DNA"/>
</dbReference>
<dbReference type="PIR" id="T20828">
    <property type="entry name" value="T20828"/>
</dbReference>
<dbReference type="RefSeq" id="NP_001022078.1">
    <property type="nucleotide sequence ID" value="NM_001026907.5"/>
</dbReference>
<dbReference type="SMR" id="P52713"/>
<dbReference type="BioGRID" id="40105">
    <property type="interactions" value="64"/>
</dbReference>
<dbReference type="DIP" id="DIP-25038N"/>
<dbReference type="FunCoup" id="P52713">
    <property type="interactions" value="1723"/>
</dbReference>
<dbReference type="STRING" id="6239.F13D12.4a.3"/>
<dbReference type="PaxDb" id="6239-F13D12.4a.3"/>
<dbReference type="PeptideAtlas" id="P52713"/>
<dbReference type="EnsemblMetazoa" id="F13D12.4a.1">
    <property type="protein sequence ID" value="F13D12.4a.1"/>
    <property type="gene ID" value="WBGene00000114"/>
</dbReference>
<dbReference type="GeneID" id="174800"/>
<dbReference type="KEGG" id="cel:CELE_F13D12.4"/>
<dbReference type="UCSC" id="F13D12.4a.2">
    <property type="organism name" value="c. elegans"/>
</dbReference>
<dbReference type="AGR" id="WB:WBGene00000114"/>
<dbReference type="CTD" id="174800"/>
<dbReference type="WormBase" id="F13D12.4a">
    <property type="protein sequence ID" value="CE02183"/>
    <property type="gene ID" value="WBGene00000114"/>
    <property type="gene designation" value="alh-8"/>
</dbReference>
<dbReference type="eggNOG" id="KOG2449">
    <property type="taxonomic scope" value="Eukaryota"/>
</dbReference>
<dbReference type="HOGENOM" id="CLU_005391_1_10_1"/>
<dbReference type="InParanoid" id="P52713"/>
<dbReference type="OMA" id="GGAKNHI"/>
<dbReference type="OrthoDB" id="310895at2759"/>
<dbReference type="PhylomeDB" id="P52713"/>
<dbReference type="Reactome" id="R-CEL-70895">
    <property type="pathway name" value="Branched-chain amino acid catabolism"/>
</dbReference>
<dbReference type="PRO" id="PR:P52713"/>
<dbReference type="Proteomes" id="UP000001940">
    <property type="component" value="Chromosome II"/>
</dbReference>
<dbReference type="Bgee" id="WBGene00000114">
    <property type="expression patterns" value="Expressed in larva and 4 other cell types or tissues"/>
</dbReference>
<dbReference type="ExpressionAtlas" id="P52713">
    <property type="expression patterns" value="baseline and differential"/>
</dbReference>
<dbReference type="GO" id="GO:0005739">
    <property type="term" value="C:mitochondrion"/>
    <property type="evidence" value="ECO:0007005"/>
    <property type="project" value="WormBase"/>
</dbReference>
<dbReference type="GO" id="GO:0018478">
    <property type="term" value="F:malonate-semialdehyde dehydrogenase (acetylating) activity"/>
    <property type="evidence" value="ECO:0007669"/>
    <property type="project" value="UniProtKB-EC"/>
</dbReference>
<dbReference type="GO" id="GO:0004491">
    <property type="term" value="F:methylmalonate-semialdehyde dehydrogenase (acylating, NAD) activity"/>
    <property type="evidence" value="ECO:0000250"/>
    <property type="project" value="UniProtKB"/>
</dbReference>
<dbReference type="GO" id="GO:0006210">
    <property type="term" value="P:thymine catabolic process"/>
    <property type="evidence" value="ECO:0000318"/>
    <property type="project" value="GO_Central"/>
</dbReference>
<dbReference type="GO" id="GO:0019859">
    <property type="term" value="P:thymine metabolic process"/>
    <property type="evidence" value="ECO:0000250"/>
    <property type="project" value="UniProtKB"/>
</dbReference>
<dbReference type="GO" id="GO:0006574">
    <property type="term" value="P:valine catabolic process"/>
    <property type="evidence" value="ECO:0000318"/>
    <property type="project" value="GO_Central"/>
</dbReference>
<dbReference type="GO" id="GO:0006573">
    <property type="term" value="P:valine metabolic process"/>
    <property type="evidence" value="ECO:0000250"/>
    <property type="project" value="UniProtKB"/>
</dbReference>
<dbReference type="CDD" id="cd07085">
    <property type="entry name" value="ALDH_F6_MMSDH"/>
    <property type="match status" value="1"/>
</dbReference>
<dbReference type="FunFam" id="3.40.309.10:FF:000002">
    <property type="entry name" value="Methylmalonate-semialdehyde dehydrogenase (Acylating)"/>
    <property type="match status" value="1"/>
</dbReference>
<dbReference type="FunFam" id="3.40.605.10:FF:000003">
    <property type="entry name" value="Methylmalonate-semialdehyde dehydrogenase [acylating]"/>
    <property type="match status" value="1"/>
</dbReference>
<dbReference type="Gene3D" id="3.40.605.10">
    <property type="entry name" value="Aldehyde Dehydrogenase, Chain A, domain 1"/>
    <property type="match status" value="1"/>
</dbReference>
<dbReference type="Gene3D" id="3.40.309.10">
    <property type="entry name" value="Aldehyde Dehydrogenase, Chain A, domain 2"/>
    <property type="match status" value="1"/>
</dbReference>
<dbReference type="InterPro" id="IPR016161">
    <property type="entry name" value="Ald_DH/histidinol_DH"/>
</dbReference>
<dbReference type="InterPro" id="IPR016163">
    <property type="entry name" value="Ald_DH_C"/>
</dbReference>
<dbReference type="InterPro" id="IPR016160">
    <property type="entry name" value="Ald_DH_CS_CYS"/>
</dbReference>
<dbReference type="InterPro" id="IPR016162">
    <property type="entry name" value="Ald_DH_N"/>
</dbReference>
<dbReference type="InterPro" id="IPR015590">
    <property type="entry name" value="Aldehyde_DH_dom"/>
</dbReference>
<dbReference type="InterPro" id="IPR010061">
    <property type="entry name" value="MeMal-semiAld_DH"/>
</dbReference>
<dbReference type="NCBIfam" id="TIGR01722">
    <property type="entry name" value="MMSDH"/>
    <property type="match status" value="1"/>
</dbReference>
<dbReference type="PANTHER" id="PTHR43866">
    <property type="entry name" value="MALONATE-SEMIALDEHYDE DEHYDROGENASE"/>
    <property type="match status" value="1"/>
</dbReference>
<dbReference type="PANTHER" id="PTHR43866:SF3">
    <property type="entry name" value="METHYLMALONATE-SEMIALDEHYDE DEHYDROGENASE [ACYLATING], MITOCHONDRIAL"/>
    <property type="match status" value="1"/>
</dbReference>
<dbReference type="Pfam" id="PF00171">
    <property type="entry name" value="Aldedh"/>
    <property type="match status" value="1"/>
</dbReference>
<dbReference type="SUPFAM" id="SSF53720">
    <property type="entry name" value="ALDH-like"/>
    <property type="match status" value="1"/>
</dbReference>
<dbReference type="PROSITE" id="PS00070">
    <property type="entry name" value="ALDEHYDE_DEHYDR_CYS"/>
    <property type="match status" value="1"/>
</dbReference>
<name>MMSA_CAEEL</name>